<keyword id="KW-0472">Membrane</keyword>
<keyword id="KW-0602">Photosynthesis</keyword>
<keyword id="KW-0604">Photosystem II</keyword>
<keyword id="KW-0793">Thylakoid</keyword>
<keyword id="KW-0812">Transmembrane</keyword>
<keyword id="KW-1133">Transmembrane helix</keyword>
<organism>
    <name type="scientific">Microcystis aeruginosa (strain NIES-843 / IAM M-2473)</name>
    <dbReference type="NCBI Taxonomy" id="449447"/>
    <lineage>
        <taxon>Bacteria</taxon>
        <taxon>Bacillati</taxon>
        <taxon>Cyanobacteriota</taxon>
        <taxon>Cyanophyceae</taxon>
        <taxon>Oscillatoriophycideae</taxon>
        <taxon>Chroococcales</taxon>
        <taxon>Microcystaceae</taxon>
        <taxon>Microcystis</taxon>
    </lineage>
</organism>
<sequence>MDWRVLIVLTPLLIAGGWAVFNIGAAALRQAQQFLSKQS</sequence>
<comment type="function">
    <text evidence="1">Loosely associated component of the core of photosystem II (PSII), it is not always seen in crystals. PSII is a light-driven water plastoquinone oxidoreductase, using light energy to abstract electrons from H(2)O, generating a proton gradient subsequently used for ATP formation.</text>
</comment>
<comment type="subunit">
    <text evidence="1">PSII is composed of 1 copy each of membrane proteins PsbA, PsbB, PsbC, PsbD, PsbE, PsbF, PsbH, PsbI, PsbJ, PsbK, PsbL, PsbM, PsbT, PsbX, PsbY, PsbZ, Psb30/Ycf12, peripheral proteins PsbO, CyanoQ (PsbQ), PsbU, PsbV and a large number of cofactors. It forms dimeric complexes.</text>
</comment>
<comment type="subcellular location">
    <subcellularLocation>
        <location evidence="1">Cellular thylakoid membrane</location>
        <topology evidence="1">Single-pass membrane protein</topology>
    </subcellularLocation>
</comment>
<comment type="similarity">
    <text evidence="1">Belongs to the PsbY family.</text>
</comment>
<feature type="chain" id="PRO_1000083248" description="Photosystem II reaction center protein Y">
    <location>
        <begin position="1"/>
        <end position="39"/>
    </location>
</feature>
<feature type="transmembrane region" description="Helical" evidence="1">
    <location>
        <begin position="5"/>
        <end position="23"/>
    </location>
</feature>
<evidence type="ECO:0000255" key="1">
    <source>
        <dbReference type="HAMAP-Rule" id="MF_00717"/>
    </source>
</evidence>
<reference key="1">
    <citation type="journal article" date="2007" name="DNA Res.">
        <title>Complete genomic structure of the bloom-forming toxic cyanobacterium Microcystis aeruginosa NIES-843.</title>
        <authorList>
            <person name="Kaneko T."/>
            <person name="Nakajima N."/>
            <person name="Okamoto S."/>
            <person name="Suzuki I."/>
            <person name="Tanabe Y."/>
            <person name="Tamaoki M."/>
            <person name="Nakamura Y."/>
            <person name="Kasai F."/>
            <person name="Watanabe A."/>
            <person name="Kawashima K."/>
            <person name="Kishida Y."/>
            <person name="Ono A."/>
            <person name="Shimizu Y."/>
            <person name="Takahashi C."/>
            <person name="Minami C."/>
            <person name="Fujishiro T."/>
            <person name="Kohara M."/>
            <person name="Katoh M."/>
            <person name="Nakazaki N."/>
            <person name="Nakayama S."/>
            <person name="Yamada M."/>
            <person name="Tabata S."/>
            <person name="Watanabe M.M."/>
        </authorList>
    </citation>
    <scope>NUCLEOTIDE SEQUENCE [LARGE SCALE GENOMIC DNA]</scope>
    <source>
        <strain>NIES-843 / IAM M-247</strain>
    </source>
</reference>
<accession>B0JKN9</accession>
<gene>
    <name evidence="1" type="primary">psbY</name>
    <name type="ordered locus">MAE_30060</name>
</gene>
<dbReference type="EMBL" id="AP009552">
    <property type="protein sequence ID" value="BAG02828.1"/>
    <property type="molecule type" value="Genomic_DNA"/>
</dbReference>
<dbReference type="RefSeq" id="WP_012265998.1">
    <property type="nucleotide sequence ID" value="NC_010296.1"/>
</dbReference>
<dbReference type="SMR" id="B0JKN9"/>
<dbReference type="STRING" id="449447.MAE_30060"/>
<dbReference type="PaxDb" id="449447-MAE_30060"/>
<dbReference type="EnsemblBacteria" id="BAG02828">
    <property type="protein sequence ID" value="BAG02828"/>
    <property type="gene ID" value="MAE_30060"/>
</dbReference>
<dbReference type="KEGG" id="mar:MAE_30060"/>
<dbReference type="PATRIC" id="fig|449447.4.peg.2744"/>
<dbReference type="eggNOG" id="ENOG5033BVG">
    <property type="taxonomic scope" value="Bacteria"/>
</dbReference>
<dbReference type="HOGENOM" id="CLU_218393_1_0_3"/>
<dbReference type="BioCyc" id="MAER449447:MAE_RS13120-MONOMER"/>
<dbReference type="Proteomes" id="UP000001510">
    <property type="component" value="Chromosome"/>
</dbReference>
<dbReference type="GO" id="GO:0009523">
    <property type="term" value="C:photosystem II"/>
    <property type="evidence" value="ECO:0007669"/>
    <property type="project" value="UniProtKB-KW"/>
</dbReference>
<dbReference type="GO" id="GO:0031676">
    <property type="term" value="C:plasma membrane-derived thylakoid membrane"/>
    <property type="evidence" value="ECO:0007669"/>
    <property type="project" value="UniProtKB-SubCell"/>
</dbReference>
<dbReference type="GO" id="GO:0030145">
    <property type="term" value="F:manganese ion binding"/>
    <property type="evidence" value="ECO:0007669"/>
    <property type="project" value="InterPro"/>
</dbReference>
<dbReference type="GO" id="GO:0015979">
    <property type="term" value="P:photosynthesis"/>
    <property type="evidence" value="ECO:0007669"/>
    <property type="project" value="UniProtKB-UniRule"/>
</dbReference>
<dbReference type="HAMAP" id="MF_00717">
    <property type="entry name" value="PSII_PsbY"/>
    <property type="match status" value="1"/>
</dbReference>
<dbReference type="InterPro" id="IPR009388">
    <property type="entry name" value="PSII_PsbY"/>
</dbReference>
<dbReference type="NCBIfam" id="NF009711">
    <property type="entry name" value="PRK13240.1"/>
    <property type="match status" value="1"/>
</dbReference>
<dbReference type="Pfam" id="PF06298">
    <property type="entry name" value="PsbY"/>
    <property type="match status" value="1"/>
</dbReference>
<proteinExistence type="inferred from homology"/>
<protein>
    <recommendedName>
        <fullName evidence="1">Photosystem II reaction center protein Y</fullName>
    </recommendedName>
</protein>
<name>PSBY_MICAN</name>